<reference key="1">
    <citation type="journal article" date="1987" name="EMBO J.">
        <title>Nucleotide sequence analysis of the env gene and its flanking regions of the human spumaretrovirus reveals two novel genes.</title>
        <authorList>
            <person name="Fluegel R.M."/>
            <person name="Rethwilm A."/>
            <person name="Maurer B."/>
            <person name="Darai G."/>
        </authorList>
    </citation>
    <scope>NUCLEOTIDE SEQUENCE [GENOMIC RNA]</scope>
</reference>
<reference key="2">
    <citation type="submission" date="1995-02" db="EMBL/GenBank/DDBJ databases">
        <authorList>
            <person name="Fluegel R.M."/>
        </authorList>
    </citation>
    <scope>NUCLEOTIDE SEQUENCE [GENOMIC RNA]</scope>
    <scope>SEQUENCE REVISION</scope>
</reference>
<reference key="3">
    <citation type="journal article" date="1999" name="J. Virol.">
        <title>An endoplasmic reticulum retrieval signal partitions human foamy virus maturation to intracytoplasmic membranes.</title>
        <authorList>
            <person name="Goepfert P.A."/>
            <person name="Shaw K."/>
            <person name="Wang G."/>
            <person name="Bansal A."/>
            <person name="Edwards B.H."/>
            <person name="Mulligan M.J."/>
        </authorList>
    </citation>
    <scope>ENDOPLASMIC RETICULUM RETENTION MOTIF</scope>
    <scope>SUBCELLULAR LOCATION</scope>
    <scope>MUTAGENESIS OF LYS-985 AND 985-LYS--LYS-987</scope>
</reference>
<reference key="4">
    <citation type="journal article" date="2000" name="J. Virol.">
        <title>Characterization of the R572T point mutant of a putative cleavage site in human foamy virus Env.</title>
        <authorList>
            <person name="Bansal A."/>
            <person name="Shaw K.L."/>
            <person name="Edwards B.H."/>
            <person name="Goepfert P.A."/>
            <person name="Mulligan M.J."/>
        </authorList>
    </citation>
    <scope>PROTEOLYTIC PROCESSING OF POLYPROTEIN</scope>
    <scope>MUTAGENESIS OF ARG-572</scope>
</reference>
<reference key="5">
    <citation type="journal article" date="2000" name="J. Virol.">
        <title>The intact retroviral Env glycoprotein of human foamy virus is a trimer.</title>
        <authorList>
            <person name="Wilk T."/>
            <person name="de Haas F."/>
            <person name="Wagner A."/>
            <person name="Rutten T."/>
            <person name="Fuller S.D."/>
            <person name="Fluegel R.M."/>
            <person name="Loechelt M."/>
        </authorList>
    </citation>
    <scope>ELECTRON MICROSCOPY (34 ANGSTROMS) OF VIRAL PARTICLES</scope>
    <scope>SUBUNIT</scope>
</reference>
<reference key="6">
    <citation type="journal article" date="2001" name="Biochem. Biophys. Res. Commun.">
        <title>Factors contributing to the fusogenic potency of foamy virus.</title>
        <authorList>
            <person name="Epand R.M."/>
            <person name="Epand R.F."/>
        </authorList>
    </citation>
    <scope>CHARACTERIZATION OF THE FUSOGENIC REGION</scope>
</reference>
<reference key="7">
    <citation type="journal article" date="2001" name="J. Virol.">
        <title>A particle-associated glycoprotein signal peptide essential for virus maturation and infectivity.</title>
        <authorList>
            <person name="Lindemann D."/>
            <person name="Pietschmann T."/>
            <person name="Picard-Maureau M."/>
            <person name="Berg A."/>
            <person name="Heinkelein M."/>
            <person name="Thurow J."/>
            <person name="Knaus P."/>
            <person name="Zentgraf H."/>
            <person name="Rethwilm A."/>
        </authorList>
    </citation>
    <scope>FUNCTION OF N-TERMINUS</scope>
    <scope>MUTAGENESIS OF TRP-10 AND TRP-13</scope>
</reference>
<reference key="8">
    <citation type="journal article" date="2004" name="J. Virol.">
        <title>Prototype foamy virus envelope glycoprotein leader peptide processing is mediated by a furin-like cellular protease, but cleavage is not essential for viral infectivity.</title>
        <authorList>
            <person name="Duda A."/>
            <person name="Stange A."/>
            <person name="Lueftenegger D."/>
            <person name="Stanke N."/>
            <person name="Westphal D."/>
            <person name="Pietschmann T."/>
            <person name="Eastman S.W."/>
            <person name="Linial M.L."/>
            <person name="Rethwilm A."/>
            <person name="Lindemann D."/>
        </authorList>
    </citation>
    <scope>PROTEIN SEQUENCE OF 127-131</scope>
    <scope>PROTEOLYTIC PROCESSING OF POLYPROTEIN</scope>
</reference>
<reference key="9">
    <citation type="journal article" date="2005" name="J. Virol.">
        <title>Analysis and function of prototype foamy virus envelope N glycosylation.</title>
        <authorList>
            <person name="Lueftenegger D."/>
            <person name="Picard-Maureau M."/>
            <person name="Stanke N."/>
            <person name="Rethwilm A."/>
            <person name="Lindemann D."/>
        </authorList>
    </citation>
    <scope>GLYCOSYLATION AT ASN-109; ASN-141; ASN-183; ASN-286; ASN-311; ASN-346; ASN-391; ASN-405; ASN-423; ASN-528; ASN-557; ASN-783; ASN-809 AND ASN-834</scope>
</reference>
<reference key="10">
    <citation type="journal article" date="2005" name="J. Virol.">
        <title>Ubiquitination of the prototype foamy virus envelope glycoprotein leader peptide regulates subviral particle release.</title>
        <authorList>
            <person name="Stanke N."/>
            <person name="Stange A."/>
            <person name="Lueftenegger D."/>
            <person name="Zentgraf H."/>
            <person name="Lindemann D."/>
        </authorList>
    </citation>
    <scope>UBIQUITINATION OF LEADER PEPTIDE</scope>
    <scope>MUTAGENESIS OF LYS-14; LYS-15; LYS-18; LYS-34 AND LYS-53</scope>
</reference>
<reference key="11">
    <citation type="journal article" date="2003" name="Curr. Top. Microbiol. Immunol.">
        <title>The foamy virus envelope glycoproteins.</title>
        <authorList>
            <person name="Lindemann D."/>
            <person name="Goepfert P.A."/>
        </authorList>
    </citation>
    <scope>REVIEW</scope>
</reference>
<reference key="12">
    <citation type="journal article" date="2004" name="Curr. Opin. Microbiol.">
        <title>Foamy viruses-a world apart.</title>
        <authorList>
            <person name="Delelis O."/>
            <person name="Lehmann-Che J."/>
            <person name="Saib A."/>
        </authorList>
    </citation>
    <scope>REVIEW</scope>
</reference>
<evidence type="ECO:0000250" key="1"/>
<evidence type="ECO:0000255" key="2"/>
<evidence type="ECO:0000269" key="3">
    <source>
    </source>
</evidence>
<evidence type="ECO:0000269" key="4">
    <source>
    </source>
</evidence>
<evidence type="ECO:0000269" key="5">
    <source>
    </source>
</evidence>
<evidence type="ECO:0000269" key="6">
    <source>
    </source>
</evidence>
<evidence type="ECO:0000269" key="7">
    <source>
    </source>
</evidence>
<evidence type="ECO:0000305" key="8"/>
<dbReference type="EMBL" id="X05591">
    <property type="protein sequence ID" value="CAA29086.1"/>
    <property type="status" value="ALT_INIT"/>
    <property type="molecule type" value="Genomic_RNA"/>
</dbReference>
<dbReference type="EMBL" id="M54978">
    <property type="protein sequence ID" value="AAA46123.1"/>
    <property type="status" value="ALT_INIT"/>
    <property type="molecule type" value="Genomic_RNA"/>
</dbReference>
<dbReference type="EMBL" id="U21247">
    <property type="protein sequence ID" value="AAB48113.1"/>
    <property type="molecule type" value="Genomic_RNA"/>
</dbReference>
<dbReference type="SMR" id="P14351"/>
<dbReference type="GlyCosmos" id="P14351">
    <property type="glycosylation" value="14 sites, No reported glycans"/>
</dbReference>
<dbReference type="iPTMnet" id="P14351"/>
<dbReference type="Proteomes" id="UP000138352">
    <property type="component" value="Genome"/>
</dbReference>
<dbReference type="GO" id="GO:0044167">
    <property type="term" value="C:host cell endoplasmic reticulum membrane"/>
    <property type="evidence" value="ECO:0007669"/>
    <property type="project" value="UniProtKB-SubCell"/>
</dbReference>
<dbReference type="GO" id="GO:0016020">
    <property type="term" value="C:membrane"/>
    <property type="evidence" value="ECO:0007669"/>
    <property type="project" value="UniProtKB-KW"/>
</dbReference>
<dbReference type="GO" id="GO:0019031">
    <property type="term" value="C:viral envelope"/>
    <property type="evidence" value="ECO:0007669"/>
    <property type="project" value="UniProtKB-KW"/>
</dbReference>
<dbReference type="GO" id="GO:0055036">
    <property type="term" value="C:virion membrane"/>
    <property type="evidence" value="ECO:0007669"/>
    <property type="project" value="UniProtKB-SubCell"/>
</dbReference>
<dbReference type="InterPro" id="IPR005070">
    <property type="entry name" value="Foamy_env"/>
</dbReference>
<dbReference type="Pfam" id="PF03408">
    <property type="entry name" value="Foamy_virus_ENV"/>
    <property type="match status" value="1"/>
</dbReference>
<gene>
    <name type="primary">env</name>
</gene>
<proteinExistence type="evidence at protein level"/>
<organismHost>
    <name type="scientific">Homo sapiens</name>
    <name type="common">Human</name>
    <dbReference type="NCBI Taxonomy" id="9606"/>
</organismHost>
<name>ENV_FOAMV</name>
<keyword id="KW-0165">Cleavage on pair of basic residues</keyword>
<keyword id="KW-0903">Direct protein sequencing</keyword>
<keyword id="KW-0325">Glycoprotein</keyword>
<keyword id="KW-1038">Host endoplasmic reticulum</keyword>
<keyword id="KW-1043">Host membrane</keyword>
<keyword id="KW-1017">Isopeptide bond</keyword>
<keyword id="KW-0472">Membrane</keyword>
<keyword id="KW-1185">Reference proteome</keyword>
<keyword id="KW-0735">Signal-anchor</keyword>
<keyword id="KW-0812">Transmembrane</keyword>
<keyword id="KW-1133">Transmembrane helix</keyword>
<keyword id="KW-0832">Ubl conjugation</keyword>
<keyword id="KW-0261">Viral envelope protein</keyword>
<keyword id="KW-0946">Virion</keyword>
<sequence>MAPPMTLQQWIIWKKMNKAHEALQNTTTVTEQQKEQIILDIQNEEVQPTRRDKFRYLLYTCCATSSRVLAWMFLVCILLIIVLVSCFVTISRIQWNKDIQVLGPVIDWNVTQRAVYQPLQTRRIARSLRMQHPVPKYVEVNMTSIPQGVYYEPHPEPIVVKERVLGLSQILMINSENIANNANLTQEVKKLLTEMVNEEMQSLSDVMIDFEIPLGDPRDQEQYIHRKCYQEFANCYLVKYKEPKPWPKEGLIADQCPLPGYHAGLTYNRQSIWDYYIKVESIRPANWTTKSKYGQARLGSFYIPSSLRQINVSHVLFCSDQLYSKWYNIENTIEQNERFLLNKLNNLTSGTSVLKKRALPKDWSSQGKNALFREINVLDICSKPESVILLNTSYYSFSLWEGDCNFTKDMISQLVPECDGFYNNSKWMHMHPYACRFWRSKKNEKEETKCRDGETKRCLYYPLWDSPESTYDFGYLAYQKNFPSPICIEQQKIRDQDYEVYSLYQERKIASKAYGIDTVLFSLKNFLNYTGTPVNEMPNARAFVGLIDPKFPPSYPNVTREHYTSCNNRKRRSVDNNYAKLRSMGYALTGAVQTLSQISDINDENLQQGIYLLRDHVITLMEATLHDISVMEGMFAVQHLHTHLNHLKTMLLERRIDWTYMSSTWLQQQLQKSDDEMKVIKRIARSLVYYVKQTHSSPTATAWEIGLYYELVIPKHIYLNNWNVVNIGHLVKSAGQLTHVTIAHPYEIINKECVETIYLHLEDCTRQDYVICDVVKIVQPCGNSSDTSDCPVWAEAVKEPFVQVNPLKNGSYLVLASSTDCQIPPYVPSIVTVNETTSCFGLDFKRPLVAEERLSFEPRLPNLQLRLPHLVGIIAKIKGIKIEVTSSGESIKEQIERAKAELLRLDIHEGDTPAWIQQLAAATKDVWPAAASALQGIGNFLSGTAQGIFGTAFSLLGYLKPILIGVGVILLVILIFKIVSWIPTKKKNQ</sequence>
<organism>
    <name type="scientific">Human spumaretrovirus</name>
    <name type="common">SFVcpz(hu)</name>
    <name type="synonym">Human foamy virus</name>
    <dbReference type="NCBI Taxonomy" id="11963"/>
    <lineage>
        <taxon>Viruses</taxon>
        <taxon>Riboviria</taxon>
        <taxon>Pararnavirae</taxon>
        <taxon>Artverviricota</taxon>
        <taxon>Revtraviricetes</taxon>
        <taxon>Ortervirales</taxon>
        <taxon>Retroviridae</taxon>
        <taxon>Spumaretrovirinae</taxon>
        <taxon>Spumavirus</taxon>
        <taxon>Simian foamy virus</taxon>
    </lineage>
</organism>
<protein>
    <recommendedName>
        <fullName>Envelope glycoprotein gp130</fullName>
    </recommendedName>
    <alternativeName>
        <fullName>Env polyprotein</fullName>
    </alternativeName>
    <component>
        <recommendedName>
            <fullName>Leader peptide</fullName>
            <shortName>LP</shortName>
        </recommendedName>
        <alternativeName>
            <fullName>Env leader protein</fullName>
            <shortName>Elp</shortName>
        </alternativeName>
        <alternativeName>
            <fullName>gp18LP</fullName>
        </alternativeName>
    </component>
    <component>
        <recommendedName>
            <fullName>Surface protein</fullName>
            <shortName>SU</shortName>
        </recommendedName>
        <alternativeName>
            <fullName>Glycoprotein 80</fullName>
            <shortName>gp80</shortName>
        </alternativeName>
    </component>
    <component>
        <recommendedName>
            <fullName>Transmembrane protein</fullName>
            <shortName>TM</shortName>
        </recommendedName>
        <alternativeName>
            <fullName>Glycoprotein 48</fullName>
            <shortName>gp48</shortName>
        </alternativeName>
    </component>
</protein>
<accession>P14351</accession>
<accession>P90288</accession>
<feature type="chain" id="PRO_0000125468" description="Envelope glycoprotein gp130">
    <location>
        <begin position="1"/>
        <end position="989"/>
    </location>
</feature>
<feature type="chain" id="PRO_0000245428" description="Leader peptide">
    <location>
        <begin position="1"/>
        <end position="126"/>
    </location>
</feature>
<feature type="chain" id="PRO_0000245429" description="Surface protein">
    <location>
        <begin position="127"/>
        <end position="572"/>
    </location>
</feature>
<feature type="chain" id="PRO_0000245430" description="Transmembrane protein">
    <location>
        <begin position="573"/>
        <end position="989"/>
    </location>
</feature>
<feature type="topological domain" description="Cytoplasmic" evidence="2">
    <location>
        <begin position="1"/>
        <end position="65"/>
    </location>
</feature>
<feature type="transmembrane region" description="Helical; Signal-anchor for type III membrane protein" evidence="2">
    <location>
        <begin position="66"/>
        <end position="88"/>
    </location>
</feature>
<feature type="topological domain" description="Lumenal" evidence="2">
    <location>
        <begin position="89"/>
        <end position="961"/>
    </location>
</feature>
<feature type="transmembrane region" description="Helical" evidence="2">
    <location>
        <begin position="962"/>
        <end position="982"/>
    </location>
</feature>
<feature type="topological domain" description="Cytoplasmic" evidence="2">
    <location>
        <begin position="983"/>
        <end position="989"/>
    </location>
</feature>
<feature type="region of interest" description="Involved in virion budding" evidence="2">
    <location>
        <begin position="1"/>
        <end position="15"/>
    </location>
</feature>
<feature type="region of interest" description="Fusion peptide" evidence="8">
    <location>
        <begin position="577"/>
        <end position="599"/>
    </location>
</feature>
<feature type="short sequence motif" description="Endoplasmic reticulum retention signal">
    <location>
        <begin position="985"/>
        <end position="987"/>
    </location>
</feature>
<feature type="site" description="Not glycosylated">
    <location>
        <position position="25"/>
    </location>
</feature>
<feature type="site" description="Cleavage; by host">
    <location>
        <begin position="126"/>
        <end position="127"/>
    </location>
</feature>
<feature type="site" description="Cleavage; by host">
    <location>
        <begin position="572"/>
        <end position="573"/>
    </location>
</feature>
<feature type="glycosylation site" description="N-linked (GlcNAc...) asparagine; by host" evidence="6">
    <location>
        <position position="109"/>
    </location>
</feature>
<feature type="glycosylation site" description="N-linked (GlcNAc...) asparagine; by host" evidence="6">
    <location>
        <position position="141"/>
    </location>
</feature>
<feature type="glycosylation site" description="N-linked (GlcNAc...) asparagine; by host" evidence="6">
    <location>
        <position position="183"/>
    </location>
</feature>
<feature type="glycosylation site" description="N-linked (GlcNAc...) asparagine; by host" evidence="6">
    <location>
        <position position="286"/>
    </location>
</feature>
<feature type="glycosylation site" description="N-linked (GlcNAc...) asparagine; by host" evidence="6">
    <location>
        <position position="311"/>
    </location>
</feature>
<feature type="glycosylation site" description="N-linked (GlcNAc...) asparagine; by host" evidence="6">
    <location>
        <position position="346"/>
    </location>
</feature>
<feature type="glycosylation site" description="N-linked (GlcNAc...) asparagine; by host" evidence="6">
    <location>
        <position position="391"/>
    </location>
</feature>
<feature type="glycosylation site" description="N-linked (GlcNAc...) asparagine; by host" evidence="6">
    <location>
        <position position="405"/>
    </location>
</feature>
<feature type="glycosylation site" description="N-linked (GlcNAc...) asparagine; by host" evidence="6">
    <location>
        <position position="423"/>
    </location>
</feature>
<feature type="glycosylation site" description="N-linked (GlcNAc...) asparagine; by host" evidence="6">
    <location>
        <position position="528"/>
    </location>
</feature>
<feature type="glycosylation site" description="N-linked (GlcNAc...) asparagine; by host" evidence="6">
    <location>
        <position position="557"/>
    </location>
</feature>
<feature type="glycosylation site" description="N-linked (GlcNAc...) asparagine; by host" evidence="6">
    <location>
        <position position="783"/>
    </location>
</feature>
<feature type="glycosylation site" description="N-linked (GlcNAc...) asparagine; by host" evidence="6">
    <location>
        <position position="809"/>
    </location>
</feature>
<feature type="glycosylation site" description="N-linked (GlcNAc...) asparagine; by host" evidence="6">
    <location>
        <position position="834"/>
    </location>
</feature>
<feature type="cross-link" description="Glycyl lysine isopeptide (Lys-Gly) (interchain with G-Cter in ubiquitin)" evidence="7">
    <location>
        <position position="14"/>
    </location>
</feature>
<feature type="cross-link" description="Glycyl lysine isopeptide (Lys-Gly) (interchain with G-Cter in ubiquitin)" evidence="7">
    <location>
        <position position="15"/>
    </location>
</feature>
<feature type="cross-link" description="Glycyl lysine isopeptide (Lys-Gly) (interchain with G-Cter in ubiquitin)" evidence="7">
    <location>
        <position position="18"/>
    </location>
</feature>
<feature type="cross-link" description="Glycyl lysine isopeptide (Lys-Gly) (interchain with G-Cter in ubiquitin)" evidence="7">
    <location>
        <position position="34"/>
    </location>
</feature>
<feature type="cross-link" description="Glycyl lysine isopeptide (Lys-Gly) (interchain with G-Cter in ubiquitin)" evidence="7">
    <location>
        <position position="53"/>
    </location>
</feature>
<feature type="mutagenesis site" description="Complete loss of particle release; when associated with A-13." evidence="5">
    <original>W</original>
    <variation>A</variation>
    <location>
        <position position="10"/>
    </location>
</feature>
<feature type="mutagenesis site" description="Complete loss of particle release; when associated with A-10." evidence="5">
    <original>W</original>
    <variation>A</variation>
    <location>
        <position position="13"/>
    </location>
</feature>
<feature type="mutagenesis site" description="Strong increase of subviral particles release; when associated with R-15; R-18; R-34 and R-53." evidence="7">
    <original>K</original>
    <variation>R</variation>
    <location>
        <position position="14"/>
    </location>
</feature>
<feature type="mutagenesis site" description="Strong increase of subviral particles release; when associated with R-14; R-18; R-34 and R-53." evidence="7">
    <original>K</original>
    <variation>R</variation>
    <location>
        <position position="15"/>
    </location>
</feature>
<feature type="mutagenesis site" description="Strong increase of subviral particles release; when associated with R-14; R-15; R-34 and R-53." evidence="7">
    <original>K</original>
    <variation>R</variation>
    <location>
        <position position="18"/>
    </location>
</feature>
<feature type="mutagenesis site" description="Strong increase of subviral particles release; when associated with R-14; R-15; R-18 and R-53." evidence="7">
    <original>K</original>
    <variation>R</variation>
    <location>
        <position position="34"/>
    </location>
</feature>
<feature type="mutagenesis site" description="Strong increase of subviral particles release; when associated with R-14; R-15; R-18 and R-34." evidence="7">
    <original>K</original>
    <variation>R</variation>
    <location>
        <position position="53"/>
    </location>
</feature>
<feature type="mutagenesis site" description="Complete loss of processing between SU and TM." evidence="4">
    <original>R</original>
    <variation>T</variation>
    <location>
        <position position="572"/>
    </location>
</feature>
<feature type="mutagenesis site" description="Increased budding from plasma membrane and decreased budding from ER." evidence="3">
    <original>KKK</original>
    <variation>RRR</variation>
    <location>
        <begin position="985"/>
        <end position="987"/>
    </location>
</feature>
<feature type="mutagenesis site" description="Increased budding from plasma membrane and decreased budding from ER." evidence="3">
    <original>KKK</original>
    <variation>SSS</variation>
    <location>
        <begin position="985"/>
        <end position="987"/>
    </location>
</feature>
<feature type="mutagenesis site" description="Increased budding from plasma membrane and decreased budding from ER." evidence="3">
    <original>K</original>
    <variation>S</variation>
    <location>
        <position position="985"/>
    </location>
</feature>
<comment type="function">
    <text evidence="1">The surface protein (SU) attaches the virus to the host cell by binding to the cell receptor. This interaction triggers the refolding of transmembrane protein (TM) and is thought to activate its fusogenic potential by unmasking its fusion peptide (By similarity).</text>
</comment>
<comment type="function">
    <text evidence="1">The transmembrane protein (TM) acts as a class I viral fusion protein. Under the current model, the protein has at least 3 conformational states: pre-fusion native state, pre-hairpin intermediate state, and post-fusion hairpin state. During viral and target cell membrane fusion, the coiled coil regions (heptad repeats) assume a trimer-of-hairpins structure, positioning the fusion peptide in close proximity to the C-terminal region of the ectodomain. The formation of this structure appears to drive apposition and subsequent fusion of viral and target cell membranes. Membranes fusion leads to delivery of the nucleocapsid into the cytoplasm (By similarity).</text>
</comment>
<comment type="function">
    <text evidence="1">The leader peptide is a component of released, infectious virions and is required for particle budding.</text>
</comment>
<comment type="subunit">
    <text evidence="1">The mature envelope protein consists of a trimer of SU-TM heterodimers. The N-terminus of leader peptide specifically interacts with Gag protein. This specific interaction between Gag protein and Env glycoprotein may allow particle egress (By similarity).</text>
</comment>
<comment type="subcellular location">
    <molecule>Envelope glycoprotein gp130</molecule>
    <subcellularLocation>
        <location>Host endoplasmic reticulum membrane</location>
    </subcellularLocation>
    <text evidence="1">The polyprotein has a highly unusual biosynthesis for a retroviral glycoprotein. It is translated as a full-length precursor protein into the rough endoplasmic reticulum and initially has a type III protein configuration with both its N and C-termini located intracytoplasmically (By similarity).</text>
</comment>
<comment type="subcellular location">
    <molecule>Leader peptide</molecule>
    <subcellularLocation>
        <location evidence="1">Virion membrane</location>
        <topology evidence="1">Single-pass type II membrane protein</topology>
    </subcellularLocation>
    <subcellularLocation>
        <location evidence="1">Host endoplasmic reticulum membrane</location>
        <topology evidence="1">Single-pass type II membrane protein</topology>
    </subcellularLocation>
    <text evidence="1">Its N-terminus is located inside the viral particle.</text>
</comment>
<comment type="subcellular location">
    <molecule>Transmembrane protein</molecule>
    <subcellularLocation>
        <location evidence="1">Virion membrane</location>
        <topology evidence="1">Single-pass type I membrane protein</topology>
    </subcellularLocation>
    <subcellularLocation>
        <location evidence="1">Host endoplasmic reticulum membrane</location>
        <topology evidence="1">Single-pass type I membrane protein</topology>
    </subcellularLocation>
</comment>
<comment type="subcellular location">
    <molecule>Surface protein</molecule>
    <subcellularLocation>
        <location evidence="1">Virion membrane</location>
        <topology evidence="1">Peripheral membrane protein</topology>
    </subcellularLocation>
    <subcellularLocation>
        <location>Host endoplasmic reticulum membrane</location>
        <topology>Peripheral membrane protein</topology>
    </subcellularLocation>
    <text evidence="8">The surface protein is not anchored to the viral envelope, but associates with the extravirion surface through its binding to TM.</text>
</comment>
<comment type="domain">
    <text evidence="1">The ER retention signal plays an important role in establishing the intracellular site of budding.</text>
</comment>
<comment type="PTM">
    <text evidence="1">Envelope glycoproteins are synthesized as an inactive precursor that is processed by host furin or a furin-like protease to yield a functional hetero-oligomeric complex.</text>
</comment>
<comment type="PTM">
    <text evidence="1">The transmembrane protein and the surface protein are N-glycosylated.</text>
</comment>
<comment type="PTM">
    <text evidence="1">Mono- and polyubiquitinated leader peptide are found in viral particles. Ubiquitination may be involved in regulating the balance between viral and subviral particles release (By similarity).</text>
</comment>
<comment type="miscellaneous">
    <text>Foamy viruses are distinct from other retroviruses in many respects. Their protease is active as an uncleaved Pro-Pol protein. Mature particles do not include the usual processed retroviral structural protein (MA, CA and NC), but instead contain two large Gag proteins. Their functional nucleic acid appears to be either RNA or dsDNA (up to 20% of extracellular particles), because they probably proceed either to an early (before integration) or late reverse transcription (after assembly). Foamy viruses have the ability to retrotranspose intracellularly with high efficiency. They bud predominantly into the endoplasmic reticulum (ER) and occasionally at the plasma membrane. Budding requires the presence of Env proteins. Most viral particles probably remain within the infected cell.</text>
</comment>
<comment type="sequence caution" evidence="8">
    <conflict type="erroneous initiation">
        <sequence resource="EMBL-CDS" id="AAA46123"/>
    </conflict>
</comment>
<comment type="sequence caution" evidence="8">
    <conflict type="erroneous initiation">
        <sequence resource="EMBL-CDS" id="CAA29086"/>
    </conflict>
</comment>